<reference key="1">
    <citation type="journal article" date="1991" name="J. Gen. Microbiol.">
        <title>Nucleotide sequence and characteristics of endoglucanase gene engB from Clostridium cellulovorans.</title>
        <authorList>
            <person name="Foong F."/>
            <person name="Hamamoto T."/>
            <person name="Shoseyov O."/>
            <person name="Doi R.H."/>
        </authorList>
    </citation>
    <scope>NUCLEOTIDE SEQUENCE [GENOMIC DNA]</scope>
</reference>
<reference key="2">
    <citation type="submission" date="2010-08" db="EMBL/GenBank/DDBJ databases">
        <title>Complete sequence of Clostridium cellulovorans 743B.</title>
        <authorList>
            <consortium name="US DOE Joint Genome Institute"/>
            <person name="Lucas S."/>
            <person name="Copeland A."/>
            <person name="Lapidus A."/>
            <person name="Cheng J.-F."/>
            <person name="Bruce D."/>
            <person name="Goodwin L."/>
            <person name="Pitluck S."/>
            <person name="Chertkov O."/>
            <person name="Detter J.C."/>
            <person name="Han C."/>
            <person name="Tapia R."/>
            <person name="Land M."/>
            <person name="Hauser L."/>
            <person name="Chang Y.-J."/>
            <person name="Jeffries C."/>
            <person name="Kyrpides N."/>
            <person name="Ivanova N."/>
            <person name="Mikhailova N."/>
            <person name="Hemme C.L."/>
            <person name="Woyke T."/>
        </authorList>
    </citation>
    <scope>NUCLEOTIDE SEQUENCE [LARGE SCALE GENOMIC DNA]</scope>
    <source>
        <strain>ATCC 35296 / DSM 3052 / OCM 3 / 743B</strain>
    </source>
</reference>
<gene>
    <name type="primary">engB</name>
    <name type="ordered locus">Clocel_1150</name>
</gene>
<protein>
    <recommendedName>
        <fullName>Endoglucanase B</fullName>
        <ecNumber>3.2.1.4</ecNumber>
    </recommendedName>
    <alternativeName>
        <fullName>Cellulase B</fullName>
    </alternativeName>
    <alternativeName>
        <fullName>Endo-1,4-beta-glucanase B</fullName>
    </alternativeName>
    <alternativeName>
        <fullName>Endo-1,4-beta-xylanase</fullName>
        <ecNumber>3.2.1.8</ecNumber>
    </alternativeName>
</protein>
<dbReference type="EC" id="3.2.1.4"/>
<dbReference type="EC" id="3.2.1.8"/>
<dbReference type="EMBL" id="M75706">
    <property type="protein sequence ID" value="AAA23231.1"/>
    <property type="molecule type" value="Genomic_DNA"/>
</dbReference>
<dbReference type="EMBL" id="CP002160">
    <property type="protein sequence ID" value="ADL50906.1"/>
    <property type="molecule type" value="Genomic_DNA"/>
</dbReference>
<dbReference type="PIR" id="A44815">
    <property type="entry name" value="A44815"/>
</dbReference>
<dbReference type="RefSeq" id="WP_010076241.1">
    <property type="nucleotide sequence ID" value="NC_014393.1"/>
</dbReference>
<dbReference type="SMR" id="P28621"/>
<dbReference type="IntAct" id="P28621">
    <property type="interactions" value="1"/>
</dbReference>
<dbReference type="STRING" id="573061.Clocel_1150"/>
<dbReference type="CAZy" id="GH5">
    <property type="family name" value="Glycoside Hydrolase Family 5"/>
</dbReference>
<dbReference type="KEGG" id="ccb:Clocel_1150"/>
<dbReference type="eggNOG" id="COG2730">
    <property type="taxonomic scope" value="Bacteria"/>
</dbReference>
<dbReference type="HOGENOM" id="CLU_018668_3_1_9"/>
<dbReference type="OrthoDB" id="9800955at2"/>
<dbReference type="Proteomes" id="UP000002730">
    <property type="component" value="Chromosome"/>
</dbReference>
<dbReference type="GO" id="GO:0009986">
    <property type="term" value="C:cell surface"/>
    <property type="evidence" value="ECO:0007669"/>
    <property type="project" value="TreeGrafter"/>
</dbReference>
<dbReference type="GO" id="GO:0005576">
    <property type="term" value="C:extracellular region"/>
    <property type="evidence" value="ECO:0007669"/>
    <property type="project" value="TreeGrafter"/>
</dbReference>
<dbReference type="GO" id="GO:0008422">
    <property type="term" value="F:beta-glucosidase activity"/>
    <property type="evidence" value="ECO:0007669"/>
    <property type="project" value="TreeGrafter"/>
</dbReference>
<dbReference type="GO" id="GO:0008810">
    <property type="term" value="F:cellulase activity"/>
    <property type="evidence" value="ECO:0007669"/>
    <property type="project" value="UniProtKB-EC"/>
</dbReference>
<dbReference type="GO" id="GO:0031176">
    <property type="term" value="F:endo-1,4-beta-xylanase activity"/>
    <property type="evidence" value="ECO:0007669"/>
    <property type="project" value="UniProtKB-EC"/>
</dbReference>
<dbReference type="GO" id="GO:0030245">
    <property type="term" value="P:cellulose catabolic process"/>
    <property type="evidence" value="ECO:0007669"/>
    <property type="project" value="UniProtKB-KW"/>
</dbReference>
<dbReference type="CDD" id="cd14256">
    <property type="entry name" value="Dockerin_I"/>
    <property type="match status" value="1"/>
</dbReference>
<dbReference type="CDD" id="cd14252">
    <property type="entry name" value="Dockerin_like"/>
    <property type="match status" value="1"/>
</dbReference>
<dbReference type="Gene3D" id="1.10.1330.10">
    <property type="entry name" value="Dockerin domain"/>
    <property type="match status" value="1"/>
</dbReference>
<dbReference type="Gene3D" id="3.20.20.80">
    <property type="entry name" value="Glycosidases"/>
    <property type="match status" value="1"/>
</dbReference>
<dbReference type="InterPro" id="IPR002105">
    <property type="entry name" value="Dockerin_1_rpt"/>
</dbReference>
<dbReference type="InterPro" id="IPR016134">
    <property type="entry name" value="Dockerin_dom"/>
</dbReference>
<dbReference type="InterPro" id="IPR036439">
    <property type="entry name" value="Dockerin_dom_sf"/>
</dbReference>
<dbReference type="InterPro" id="IPR018247">
    <property type="entry name" value="EF_Hand_1_Ca_BS"/>
</dbReference>
<dbReference type="InterPro" id="IPR001547">
    <property type="entry name" value="Glyco_hydro_5"/>
</dbReference>
<dbReference type="InterPro" id="IPR018087">
    <property type="entry name" value="Glyco_hydro_5_CS"/>
</dbReference>
<dbReference type="InterPro" id="IPR017853">
    <property type="entry name" value="Glycoside_hydrolase_SF"/>
</dbReference>
<dbReference type="InterPro" id="IPR050386">
    <property type="entry name" value="Glycosyl_hydrolase_5"/>
</dbReference>
<dbReference type="PANTHER" id="PTHR31297:SF41">
    <property type="entry name" value="ENDOGLUCANASE, PUTATIVE (AFU_ORTHOLOGUE AFUA_5G01830)-RELATED"/>
    <property type="match status" value="1"/>
</dbReference>
<dbReference type="PANTHER" id="PTHR31297">
    <property type="entry name" value="GLUCAN ENDO-1,6-BETA-GLUCOSIDASE B"/>
    <property type="match status" value="1"/>
</dbReference>
<dbReference type="Pfam" id="PF00150">
    <property type="entry name" value="Cellulase"/>
    <property type="match status" value="1"/>
</dbReference>
<dbReference type="Pfam" id="PF00404">
    <property type="entry name" value="Dockerin_1"/>
    <property type="match status" value="1"/>
</dbReference>
<dbReference type="SUPFAM" id="SSF51445">
    <property type="entry name" value="(Trans)glycosidases"/>
    <property type="match status" value="1"/>
</dbReference>
<dbReference type="SUPFAM" id="SSF63446">
    <property type="entry name" value="Type I dockerin domain"/>
    <property type="match status" value="1"/>
</dbReference>
<dbReference type="PROSITE" id="PS00448">
    <property type="entry name" value="CLOS_CELLULOSOME_RPT"/>
    <property type="match status" value="2"/>
</dbReference>
<dbReference type="PROSITE" id="PS51766">
    <property type="entry name" value="DOCKERIN"/>
    <property type="match status" value="1"/>
</dbReference>
<dbReference type="PROSITE" id="PS00018">
    <property type="entry name" value="EF_HAND_1"/>
    <property type="match status" value="2"/>
</dbReference>
<dbReference type="PROSITE" id="PS00659">
    <property type="entry name" value="GLYCOSYL_HYDROL_F5"/>
    <property type="match status" value="1"/>
</dbReference>
<keyword id="KW-0119">Carbohydrate metabolism</keyword>
<keyword id="KW-0136">Cellulose degradation</keyword>
<keyword id="KW-0326">Glycosidase</keyword>
<keyword id="KW-0378">Hydrolase</keyword>
<keyword id="KW-0624">Polysaccharide degradation</keyword>
<keyword id="KW-1185">Reference proteome</keyword>
<keyword id="KW-0732">Signal</keyword>
<organism>
    <name type="scientific">Clostridium cellulovorans (strain ATCC 35296 / DSM 3052 / OCM 3 / 743B)</name>
    <dbReference type="NCBI Taxonomy" id="573061"/>
    <lineage>
        <taxon>Bacteria</taxon>
        <taxon>Bacillati</taxon>
        <taxon>Bacillota</taxon>
        <taxon>Clostridia</taxon>
        <taxon>Eubacteriales</taxon>
        <taxon>Clostridiaceae</taxon>
        <taxon>Clostridium</taxon>
    </lineage>
</organism>
<evidence type="ECO:0000250" key="1"/>
<evidence type="ECO:0000255" key="2"/>
<evidence type="ECO:0000255" key="3">
    <source>
        <dbReference type="PROSITE-ProRule" id="PRU01102"/>
    </source>
</evidence>
<evidence type="ECO:0000305" key="4"/>
<accession>P28621</accession>
<accession>D9SUK1</accession>
<sequence>MNKRLSRGKISLLASVFVTTTFMGGVNVLASTAKTGIRDITSQQVVKEMKVGWNLGNTMDATGGETNWGNPLTTHAMIDKVKAAGFNTLRLPITWDGHIGAAPDYAIDATWMNRVEEIANYAFDNNMYVIINLHHEDGWLKPYYANEAEVKAKITKVWTQIANRFKDYGDYLIFETMNEPRPVGAADEWSGGSYENRDMVNRYNLTAVNTIRATGGNNALRHIMVPTLAAAALSTTMNDYIVPNNDSRVIVSLHMYSPYFFSADLTSQWTTATWGSDADKAALSADFDAVYNKFVKNGRAVVIGEMGTINKNNLDSRVKHAEYYAKEATVRGITPIWWDNGYCVAGKEQTFGIFNRKNLTWCCPEVMQAFIRGAGATQTQTSYSLGDVNKDGKVNAIDYAVLKSILLGTNTNVDLSVSDMNKDGKVNALDLAVLKKMLLS</sequence>
<comment type="function">
    <text>Has endoglucanase activity on carboxymethyl-cellulose (CMC), xylan and lichenan, but not Avicel.</text>
</comment>
<comment type="catalytic activity">
    <reaction>
        <text>Endohydrolysis of (1-&gt;4)-beta-D-glucosidic linkages in cellulose, lichenin and cereal beta-D-glucans.</text>
        <dbReference type="EC" id="3.2.1.4"/>
    </reaction>
</comment>
<comment type="catalytic activity">
    <reaction>
        <text>Endohydrolysis of (1-&gt;4)-beta-D-xylosidic linkages in xylans.</text>
        <dbReference type="EC" id="3.2.1.8"/>
    </reaction>
</comment>
<comment type="miscellaneous">
    <text>Up to 32 AA of the N-terminus and 52 AA of the C-terminus are not required for catalytic activity.</text>
</comment>
<comment type="similarity">
    <text evidence="4">Belongs to the glycosyl hydrolase 5 (cellulase A) family.</text>
</comment>
<name>GUNB_CLOC7</name>
<proteinExistence type="inferred from homology"/>
<feature type="signal peptide" evidence="2">
    <location>
        <begin position="1"/>
        <end position="33"/>
    </location>
</feature>
<feature type="chain" id="PRO_0000007847" description="Endoglucanase B">
    <location>
        <begin position="34"/>
        <end position="440"/>
    </location>
</feature>
<feature type="domain" description="Dockerin" evidence="3">
    <location>
        <begin position="381"/>
        <end position="440"/>
    </location>
</feature>
<feature type="active site" description="Proton donor" evidence="1">
    <location>
        <position position="179"/>
    </location>
</feature>
<feature type="active site" description="Nucleophile" evidence="1">
    <location>
        <position position="305"/>
    </location>
</feature>